<keyword id="KW-0030">Aminoacyl-tRNA synthetase</keyword>
<keyword id="KW-0067">ATP-binding</keyword>
<keyword id="KW-0963">Cytoplasm</keyword>
<keyword id="KW-0436">Ligase</keyword>
<keyword id="KW-0547">Nucleotide-binding</keyword>
<keyword id="KW-0648">Protein biosynthesis</keyword>
<keyword id="KW-1185">Reference proteome</keyword>
<sequence>MHDIKWIREEPEALVRALVRRQVAKDEAVALRDKLLSLDTARRETLTKLEGLLARRNAASKEIGQAKAAKDEARAAALMDEVAKLKVDVPELEQSAKAIEGELDGLLAAIPNVPLESVPEGKDEHDNVELKVVGTKRNYAFTPKQHFELGEALGLMDFETASKLSGARFVVNKGPLARLERALGQFFLDMHVEQHGYTEVNPPLLVRDETMYGTAQLPKFFDDQFAVYAGSTQRAIGDETDAERYWLIPTAEVPLTNLVRDSILSEDELPLRFTANTPCFRAEAGSAGRDTRGMIRQHQFTKVEMVSITTPETSEEEHHRMLACAEAVLQKLDLHYRVVTLCTGDMGFASRKTFDIEVWLPGQNAYREISSCSVCGDFQARRMNARYRPAEGKGPRFVHTLNGSGVAVGRALVAVLETYQQEDGSIVVPDVLQSYMGGVTVIAKA</sequence>
<proteinExistence type="inferred from homology"/>
<organism>
    <name type="scientific">Azorhizobium caulinodans (strain ATCC 43989 / DSM 5975 / JCM 20966 / LMG 6465 / NBRC 14845 / NCIMB 13405 / ORS 571)</name>
    <dbReference type="NCBI Taxonomy" id="438753"/>
    <lineage>
        <taxon>Bacteria</taxon>
        <taxon>Pseudomonadati</taxon>
        <taxon>Pseudomonadota</taxon>
        <taxon>Alphaproteobacteria</taxon>
        <taxon>Hyphomicrobiales</taxon>
        <taxon>Xanthobacteraceae</taxon>
        <taxon>Azorhizobium</taxon>
    </lineage>
</organism>
<dbReference type="EC" id="6.1.1.11" evidence="1"/>
<dbReference type="EMBL" id="AP009384">
    <property type="protein sequence ID" value="BAF87737.1"/>
    <property type="molecule type" value="Genomic_DNA"/>
</dbReference>
<dbReference type="RefSeq" id="WP_012170267.1">
    <property type="nucleotide sequence ID" value="NC_009937.1"/>
</dbReference>
<dbReference type="SMR" id="A8I4J4"/>
<dbReference type="STRING" id="438753.AZC_1739"/>
<dbReference type="KEGG" id="azc:AZC_1739"/>
<dbReference type="eggNOG" id="COG0172">
    <property type="taxonomic scope" value="Bacteria"/>
</dbReference>
<dbReference type="HOGENOM" id="CLU_023797_1_1_5"/>
<dbReference type="UniPathway" id="UPA00906">
    <property type="reaction ID" value="UER00895"/>
</dbReference>
<dbReference type="Proteomes" id="UP000000270">
    <property type="component" value="Chromosome"/>
</dbReference>
<dbReference type="GO" id="GO:0005737">
    <property type="term" value="C:cytoplasm"/>
    <property type="evidence" value="ECO:0007669"/>
    <property type="project" value="UniProtKB-SubCell"/>
</dbReference>
<dbReference type="GO" id="GO:0005524">
    <property type="term" value="F:ATP binding"/>
    <property type="evidence" value="ECO:0007669"/>
    <property type="project" value="UniProtKB-UniRule"/>
</dbReference>
<dbReference type="GO" id="GO:0004828">
    <property type="term" value="F:serine-tRNA ligase activity"/>
    <property type="evidence" value="ECO:0007669"/>
    <property type="project" value="UniProtKB-UniRule"/>
</dbReference>
<dbReference type="GO" id="GO:0016260">
    <property type="term" value="P:selenocysteine biosynthetic process"/>
    <property type="evidence" value="ECO:0007669"/>
    <property type="project" value="UniProtKB-UniRule"/>
</dbReference>
<dbReference type="GO" id="GO:0006434">
    <property type="term" value="P:seryl-tRNA aminoacylation"/>
    <property type="evidence" value="ECO:0007669"/>
    <property type="project" value="UniProtKB-UniRule"/>
</dbReference>
<dbReference type="CDD" id="cd00770">
    <property type="entry name" value="SerRS_core"/>
    <property type="match status" value="1"/>
</dbReference>
<dbReference type="Gene3D" id="3.30.930.10">
    <property type="entry name" value="Bira Bifunctional Protein, Domain 2"/>
    <property type="match status" value="1"/>
</dbReference>
<dbReference type="Gene3D" id="1.10.287.40">
    <property type="entry name" value="Serine-tRNA synthetase, tRNA binding domain"/>
    <property type="match status" value="1"/>
</dbReference>
<dbReference type="HAMAP" id="MF_00176">
    <property type="entry name" value="Ser_tRNA_synth_type1"/>
    <property type="match status" value="1"/>
</dbReference>
<dbReference type="InterPro" id="IPR002314">
    <property type="entry name" value="aa-tRNA-synt_IIb"/>
</dbReference>
<dbReference type="InterPro" id="IPR006195">
    <property type="entry name" value="aa-tRNA-synth_II"/>
</dbReference>
<dbReference type="InterPro" id="IPR045864">
    <property type="entry name" value="aa-tRNA-synth_II/BPL/LPL"/>
</dbReference>
<dbReference type="InterPro" id="IPR002317">
    <property type="entry name" value="Ser-tRNA-ligase_type_1"/>
</dbReference>
<dbReference type="InterPro" id="IPR015866">
    <property type="entry name" value="Ser-tRNA-synth_1_N"/>
</dbReference>
<dbReference type="InterPro" id="IPR042103">
    <property type="entry name" value="SerRS_1_N_sf"/>
</dbReference>
<dbReference type="InterPro" id="IPR033729">
    <property type="entry name" value="SerRS_core"/>
</dbReference>
<dbReference type="InterPro" id="IPR010978">
    <property type="entry name" value="tRNA-bd_arm"/>
</dbReference>
<dbReference type="NCBIfam" id="TIGR00414">
    <property type="entry name" value="serS"/>
    <property type="match status" value="1"/>
</dbReference>
<dbReference type="PANTHER" id="PTHR43697:SF1">
    <property type="entry name" value="SERINE--TRNA LIGASE"/>
    <property type="match status" value="1"/>
</dbReference>
<dbReference type="PANTHER" id="PTHR43697">
    <property type="entry name" value="SERYL-TRNA SYNTHETASE"/>
    <property type="match status" value="1"/>
</dbReference>
<dbReference type="Pfam" id="PF02403">
    <property type="entry name" value="Seryl_tRNA_N"/>
    <property type="match status" value="1"/>
</dbReference>
<dbReference type="Pfam" id="PF00587">
    <property type="entry name" value="tRNA-synt_2b"/>
    <property type="match status" value="1"/>
</dbReference>
<dbReference type="PIRSF" id="PIRSF001529">
    <property type="entry name" value="Ser-tRNA-synth_IIa"/>
    <property type="match status" value="1"/>
</dbReference>
<dbReference type="PRINTS" id="PR00981">
    <property type="entry name" value="TRNASYNTHSER"/>
</dbReference>
<dbReference type="SUPFAM" id="SSF55681">
    <property type="entry name" value="Class II aaRS and biotin synthetases"/>
    <property type="match status" value="1"/>
</dbReference>
<dbReference type="SUPFAM" id="SSF46589">
    <property type="entry name" value="tRNA-binding arm"/>
    <property type="match status" value="1"/>
</dbReference>
<dbReference type="PROSITE" id="PS50862">
    <property type="entry name" value="AA_TRNA_LIGASE_II"/>
    <property type="match status" value="1"/>
</dbReference>
<gene>
    <name evidence="1" type="primary">serS</name>
    <name type="ordered locus">AZC_1739</name>
</gene>
<accession>A8I4J4</accession>
<reference key="1">
    <citation type="submission" date="2007-04" db="EMBL/GenBank/DDBJ databases">
        <title>Complete genome sequence of the nitrogen-fixing bacterium Azorhizobium caulinodans ORS571.</title>
        <authorList>
            <person name="Lee K.B."/>
            <person name="Backer P.D."/>
            <person name="Aono T."/>
            <person name="Liu C.T."/>
            <person name="Suzuki S."/>
            <person name="Suzuki T."/>
            <person name="Kaneko T."/>
            <person name="Yamada M."/>
            <person name="Tabata S."/>
            <person name="Kupfer D.M."/>
            <person name="Najar F.Z."/>
            <person name="Wiley G.B."/>
            <person name="Roe B."/>
            <person name="Binnewies T."/>
            <person name="Ussery D."/>
            <person name="Vereecke D."/>
            <person name="Gevers D."/>
            <person name="Holsters M."/>
            <person name="Oyaizu H."/>
        </authorList>
    </citation>
    <scope>NUCLEOTIDE SEQUENCE [LARGE SCALE GENOMIC DNA]</scope>
    <source>
        <strain>ATCC 43989 / DSM 5975 / JCM 20966 / LMG 6465 / NBRC 14845 / NCIMB 13405 / ORS 571</strain>
    </source>
</reference>
<protein>
    <recommendedName>
        <fullName evidence="1">Serine--tRNA ligase</fullName>
        <ecNumber evidence="1">6.1.1.11</ecNumber>
    </recommendedName>
    <alternativeName>
        <fullName evidence="1">Seryl-tRNA synthetase</fullName>
        <shortName evidence="1">SerRS</shortName>
    </alternativeName>
    <alternativeName>
        <fullName evidence="1">Seryl-tRNA(Ser/Sec) synthetase</fullName>
    </alternativeName>
</protein>
<name>SYS_AZOC5</name>
<comment type="function">
    <text evidence="1">Catalyzes the attachment of serine to tRNA(Ser). Is also able to aminoacylate tRNA(Sec) with serine, to form the misacylated tRNA L-seryl-tRNA(Sec), which will be further converted into selenocysteinyl-tRNA(Sec).</text>
</comment>
<comment type="catalytic activity">
    <reaction evidence="1">
        <text>tRNA(Ser) + L-serine + ATP = L-seryl-tRNA(Ser) + AMP + diphosphate + H(+)</text>
        <dbReference type="Rhea" id="RHEA:12292"/>
        <dbReference type="Rhea" id="RHEA-COMP:9669"/>
        <dbReference type="Rhea" id="RHEA-COMP:9703"/>
        <dbReference type="ChEBI" id="CHEBI:15378"/>
        <dbReference type="ChEBI" id="CHEBI:30616"/>
        <dbReference type="ChEBI" id="CHEBI:33019"/>
        <dbReference type="ChEBI" id="CHEBI:33384"/>
        <dbReference type="ChEBI" id="CHEBI:78442"/>
        <dbReference type="ChEBI" id="CHEBI:78533"/>
        <dbReference type="ChEBI" id="CHEBI:456215"/>
        <dbReference type="EC" id="6.1.1.11"/>
    </reaction>
</comment>
<comment type="catalytic activity">
    <reaction evidence="1">
        <text>tRNA(Sec) + L-serine + ATP = L-seryl-tRNA(Sec) + AMP + diphosphate + H(+)</text>
        <dbReference type="Rhea" id="RHEA:42580"/>
        <dbReference type="Rhea" id="RHEA-COMP:9742"/>
        <dbReference type="Rhea" id="RHEA-COMP:10128"/>
        <dbReference type="ChEBI" id="CHEBI:15378"/>
        <dbReference type="ChEBI" id="CHEBI:30616"/>
        <dbReference type="ChEBI" id="CHEBI:33019"/>
        <dbReference type="ChEBI" id="CHEBI:33384"/>
        <dbReference type="ChEBI" id="CHEBI:78442"/>
        <dbReference type="ChEBI" id="CHEBI:78533"/>
        <dbReference type="ChEBI" id="CHEBI:456215"/>
        <dbReference type="EC" id="6.1.1.11"/>
    </reaction>
</comment>
<comment type="pathway">
    <text evidence="1">Aminoacyl-tRNA biosynthesis; selenocysteinyl-tRNA(Sec) biosynthesis; L-seryl-tRNA(Sec) from L-serine and tRNA(Sec): step 1/1.</text>
</comment>
<comment type="subunit">
    <text evidence="1">Homodimer. The tRNA molecule binds across the dimer.</text>
</comment>
<comment type="subcellular location">
    <subcellularLocation>
        <location evidence="1">Cytoplasm</location>
    </subcellularLocation>
</comment>
<comment type="domain">
    <text evidence="1">Consists of two distinct domains, a catalytic core and a N-terminal extension that is involved in tRNA binding.</text>
</comment>
<comment type="similarity">
    <text evidence="1">Belongs to the class-II aminoacyl-tRNA synthetase family. Type-1 seryl-tRNA synthetase subfamily.</text>
</comment>
<feature type="chain" id="PRO_1000071631" description="Serine--tRNA ligase">
    <location>
        <begin position="1"/>
        <end position="445"/>
    </location>
</feature>
<feature type="binding site" evidence="1">
    <location>
        <begin position="250"/>
        <end position="252"/>
    </location>
    <ligand>
        <name>L-serine</name>
        <dbReference type="ChEBI" id="CHEBI:33384"/>
    </ligand>
</feature>
<feature type="binding site" evidence="1">
    <location>
        <begin position="281"/>
        <end position="283"/>
    </location>
    <ligand>
        <name>ATP</name>
        <dbReference type="ChEBI" id="CHEBI:30616"/>
    </ligand>
</feature>
<feature type="binding site" evidence="1">
    <location>
        <position position="304"/>
    </location>
    <ligand>
        <name>L-serine</name>
        <dbReference type="ChEBI" id="CHEBI:33384"/>
    </ligand>
</feature>
<feature type="binding site" evidence="1">
    <location>
        <begin position="368"/>
        <end position="371"/>
    </location>
    <ligand>
        <name>ATP</name>
        <dbReference type="ChEBI" id="CHEBI:30616"/>
    </ligand>
</feature>
<feature type="binding site" evidence="1">
    <location>
        <position position="404"/>
    </location>
    <ligand>
        <name>L-serine</name>
        <dbReference type="ChEBI" id="CHEBI:33384"/>
    </ligand>
</feature>
<evidence type="ECO:0000255" key="1">
    <source>
        <dbReference type="HAMAP-Rule" id="MF_00176"/>
    </source>
</evidence>